<name>PSK1_ARATH</name>
<gene>
    <name type="primary">PSK1</name>
    <name type="ordered locus">At1g13590</name>
    <name type="ORF">F21F23.2</name>
</gene>
<evidence type="ECO:0000250" key="1"/>
<evidence type="ECO:0000255" key="2"/>
<evidence type="ECO:0000256" key="3">
    <source>
        <dbReference type="SAM" id="MobiDB-lite"/>
    </source>
</evidence>
<evidence type="ECO:0000269" key="4">
    <source>
    </source>
</evidence>
<evidence type="ECO:0000305" key="5"/>
<comment type="function">
    <text evidence="1">Promotes plant cell differentiation, organogenesis and somatic embryogenesis as well as cell proliferation.</text>
</comment>
<comment type="subcellular location">
    <subcellularLocation>
        <location evidence="1">Secreted</location>
    </subcellularLocation>
</comment>
<comment type="tissue specificity">
    <text evidence="4">Expressed only in roots.</text>
</comment>
<comment type="PTM">
    <text evidence="1">Sulfation is important for activity and for the binding to a putative membrane receptor.</text>
</comment>
<comment type="PTM">
    <text evidence="1">PSK-beta is produced from PSK-alpha by exopeptidase digestion.</text>
</comment>
<comment type="similarity">
    <text evidence="5">Belongs to the phytosulfokine family.</text>
</comment>
<comment type="sequence caution" evidence="5">
    <conflict type="erroneous initiation">
        <sequence resource="EMBL-CDS" id="AAF81285"/>
    </conflict>
</comment>
<reference key="1">
    <citation type="journal article" date="2001" name="Plant Physiol.">
        <title>Diversity of Arabidopsis genes encoding precursors for phytosulfokine, a peptide growth factor.</title>
        <authorList>
            <person name="Yang H."/>
            <person name="Matsubayashi Y."/>
            <person name="Nakamura K."/>
            <person name="Sakagami Y."/>
        </authorList>
    </citation>
    <scope>NUCLEOTIDE SEQUENCE [GENOMIC DNA]</scope>
    <source>
        <strain>cv. Columbia</strain>
    </source>
</reference>
<reference key="2">
    <citation type="journal article" date="2000" name="Nature">
        <title>Sequence and analysis of chromosome 1 of the plant Arabidopsis thaliana.</title>
        <authorList>
            <person name="Theologis A."/>
            <person name="Ecker J.R."/>
            <person name="Palm C.J."/>
            <person name="Federspiel N.A."/>
            <person name="Kaul S."/>
            <person name="White O."/>
            <person name="Alonso J."/>
            <person name="Altafi H."/>
            <person name="Araujo R."/>
            <person name="Bowman C.L."/>
            <person name="Brooks S.Y."/>
            <person name="Buehler E."/>
            <person name="Chan A."/>
            <person name="Chao Q."/>
            <person name="Chen H."/>
            <person name="Cheuk R.F."/>
            <person name="Chin C.W."/>
            <person name="Chung M.K."/>
            <person name="Conn L."/>
            <person name="Conway A.B."/>
            <person name="Conway A.R."/>
            <person name="Creasy T.H."/>
            <person name="Dewar K."/>
            <person name="Dunn P."/>
            <person name="Etgu P."/>
            <person name="Feldblyum T.V."/>
            <person name="Feng J.-D."/>
            <person name="Fong B."/>
            <person name="Fujii C.Y."/>
            <person name="Gill J.E."/>
            <person name="Goldsmith A.D."/>
            <person name="Haas B."/>
            <person name="Hansen N.F."/>
            <person name="Hughes B."/>
            <person name="Huizar L."/>
            <person name="Hunter J.L."/>
            <person name="Jenkins J."/>
            <person name="Johnson-Hopson C."/>
            <person name="Khan S."/>
            <person name="Khaykin E."/>
            <person name="Kim C.J."/>
            <person name="Koo H.L."/>
            <person name="Kremenetskaia I."/>
            <person name="Kurtz D.B."/>
            <person name="Kwan A."/>
            <person name="Lam B."/>
            <person name="Langin-Hooper S."/>
            <person name="Lee A."/>
            <person name="Lee J.M."/>
            <person name="Lenz C.A."/>
            <person name="Li J.H."/>
            <person name="Li Y.-P."/>
            <person name="Lin X."/>
            <person name="Liu S.X."/>
            <person name="Liu Z.A."/>
            <person name="Luros J.S."/>
            <person name="Maiti R."/>
            <person name="Marziali A."/>
            <person name="Militscher J."/>
            <person name="Miranda M."/>
            <person name="Nguyen M."/>
            <person name="Nierman W.C."/>
            <person name="Osborne B.I."/>
            <person name="Pai G."/>
            <person name="Peterson J."/>
            <person name="Pham P.K."/>
            <person name="Rizzo M."/>
            <person name="Rooney T."/>
            <person name="Rowley D."/>
            <person name="Sakano H."/>
            <person name="Salzberg S.L."/>
            <person name="Schwartz J.R."/>
            <person name="Shinn P."/>
            <person name="Southwick A.M."/>
            <person name="Sun H."/>
            <person name="Tallon L.J."/>
            <person name="Tambunga G."/>
            <person name="Toriumi M.J."/>
            <person name="Town C.D."/>
            <person name="Utterback T."/>
            <person name="Van Aken S."/>
            <person name="Vaysberg M."/>
            <person name="Vysotskaia V.S."/>
            <person name="Walker M."/>
            <person name="Wu D."/>
            <person name="Yu G."/>
            <person name="Fraser C.M."/>
            <person name="Venter J.C."/>
            <person name="Davis R.W."/>
        </authorList>
    </citation>
    <scope>NUCLEOTIDE SEQUENCE [LARGE SCALE GENOMIC DNA]</scope>
    <source>
        <strain>cv. Columbia</strain>
    </source>
</reference>
<reference key="3">
    <citation type="journal article" date="2017" name="Plant J.">
        <title>Araport11: a complete reannotation of the Arabidopsis thaliana reference genome.</title>
        <authorList>
            <person name="Cheng C.Y."/>
            <person name="Krishnakumar V."/>
            <person name="Chan A.P."/>
            <person name="Thibaud-Nissen F."/>
            <person name="Schobel S."/>
            <person name="Town C.D."/>
        </authorList>
    </citation>
    <scope>GENOME REANNOTATION</scope>
    <source>
        <strain>cv. Columbia</strain>
    </source>
</reference>
<reference key="4">
    <citation type="submission" date="2004-09" db="EMBL/GenBank/DDBJ databases">
        <title>Large-scale analysis of RIKEN Arabidopsis full-length (RAFL) cDNAs.</title>
        <authorList>
            <person name="Totoki Y."/>
            <person name="Seki M."/>
            <person name="Ishida J."/>
            <person name="Nakajima M."/>
            <person name="Enju A."/>
            <person name="Kamiya A."/>
            <person name="Narusaka M."/>
            <person name="Shin-i T."/>
            <person name="Nakagawa M."/>
            <person name="Sakamoto N."/>
            <person name="Oishi K."/>
            <person name="Kohara Y."/>
            <person name="Kobayashi M."/>
            <person name="Toyoda A."/>
            <person name="Sakaki Y."/>
            <person name="Sakurai T."/>
            <person name="Iida K."/>
            <person name="Akiyama K."/>
            <person name="Satou M."/>
            <person name="Toyoda T."/>
            <person name="Konagaya A."/>
            <person name="Carninci P."/>
            <person name="Kawai J."/>
            <person name="Hayashizaki Y."/>
            <person name="Shinozaki K."/>
        </authorList>
    </citation>
    <scope>NUCLEOTIDE SEQUENCE [LARGE SCALE MRNA]</scope>
    <source>
        <strain>cv. Columbia</strain>
    </source>
</reference>
<reference key="5">
    <citation type="journal article" date="2002" name="Plant Sci.">
        <title>Comparative analysis of PSK peptide growth factor precursor homologs.</title>
        <authorList>
            <person name="Lorbiecke R."/>
            <person name="Sauter M.M."/>
        </authorList>
    </citation>
    <scope>IDENTIFICATION</scope>
</reference>
<reference key="6">
    <citation type="journal article" date="2006" name="Plant Physiol.">
        <title>Disruption and overexpression of Arabidopsis phytosulfokine receptor gene affects cellular longevity and potential for growth.</title>
        <authorList>
            <person name="Matsubayashi Y."/>
            <person name="Ogawa M."/>
            <person name="Kihara H."/>
            <person name="Niwa M."/>
            <person name="Sakagami Y."/>
        </authorList>
    </citation>
    <scope>TISSUE SPECIFICITY</scope>
</reference>
<proteinExistence type="evidence at transcript level"/>
<protein>
    <recommendedName>
        <fullName>Phytosulfokines 1</fullName>
        <shortName>AtPSK1</shortName>
    </recommendedName>
    <component>
        <recommendedName>
            <fullName>Phytosulfokine-alpha</fullName>
            <shortName>PSK-alpha</shortName>
            <shortName>Phytosulfokine-a</shortName>
        </recommendedName>
    </component>
    <component>
        <recommendedName>
            <fullName>Phytosulfokine-beta</fullName>
            <shortName>PSK-beta</shortName>
            <shortName>Phytosulfokine-b</shortName>
        </recommendedName>
    </component>
</protein>
<dbReference type="EMBL" id="AB074572">
    <property type="protein sequence ID" value="BAB72176.2"/>
    <property type="molecule type" value="Genomic_DNA"/>
</dbReference>
<dbReference type="EMBL" id="AC027656">
    <property type="protein sequence ID" value="AAF81285.1"/>
    <property type="status" value="ALT_INIT"/>
    <property type="molecule type" value="Genomic_DNA"/>
</dbReference>
<dbReference type="EMBL" id="CP002684">
    <property type="protein sequence ID" value="AEE29039.1"/>
    <property type="molecule type" value="Genomic_DNA"/>
</dbReference>
<dbReference type="EMBL" id="AK176091">
    <property type="protein sequence ID" value="BAD43854.1"/>
    <property type="molecule type" value="mRNA"/>
</dbReference>
<dbReference type="EMBL" id="BK000111">
    <property type="protein sequence ID" value="DAA00275.1"/>
    <property type="molecule type" value="mRNA"/>
</dbReference>
<dbReference type="RefSeq" id="NP_172816.2">
    <property type="nucleotide sequence ID" value="NM_101229.3"/>
</dbReference>
<dbReference type="STRING" id="3702.Q9LMY9"/>
<dbReference type="PaxDb" id="3702-AT1G13590.1"/>
<dbReference type="ProteomicsDB" id="248755"/>
<dbReference type="EnsemblPlants" id="AT1G13590.1">
    <property type="protein sequence ID" value="AT1G13590.1"/>
    <property type="gene ID" value="AT1G13590"/>
</dbReference>
<dbReference type="GeneID" id="837920"/>
<dbReference type="Gramene" id="AT1G13590.1">
    <property type="protein sequence ID" value="AT1G13590.1"/>
    <property type="gene ID" value="AT1G13590"/>
</dbReference>
<dbReference type="KEGG" id="ath:AT1G13590"/>
<dbReference type="Araport" id="AT1G13590"/>
<dbReference type="TAIR" id="AT1G13590">
    <property type="gene designation" value="PSK1"/>
</dbReference>
<dbReference type="HOGENOM" id="CLU_165727_1_0_1"/>
<dbReference type="InParanoid" id="Q9LMY9"/>
<dbReference type="OMA" id="THEKARS"/>
<dbReference type="PhylomeDB" id="Q9LMY9"/>
<dbReference type="PRO" id="PR:Q9LMY9"/>
<dbReference type="Proteomes" id="UP000006548">
    <property type="component" value="Chromosome 1"/>
</dbReference>
<dbReference type="ExpressionAtlas" id="Q9LMY9">
    <property type="expression patterns" value="baseline and differential"/>
</dbReference>
<dbReference type="GO" id="GO:0031012">
    <property type="term" value="C:extracellular matrix"/>
    <property type="evidence" value="ECO:0000250"/>
    <property type="project" value="TAIR"/>
</dbReference>
<dbReference type="GO" id="GO:0005576">
    <property type="term" value="C:extracellular region"/>
    <property type="evidence" value="ECO:0007669"/>
    <property type="project" value="UniProtKB-SubCell"/>
</dbReference>
<dbReference type="GO" id="GO:0008083">
    <property type="term" value="F:growth factor activity"/>
    <property type="evidence" value="ECO:0007669"/>
    <property type="project" value="UniProtKB-KW"/>
</dbReference>
<dbReference type="GO" id="GO:0030154">
    <property type="term" value="P:cell differentiation"/>
    <property type="evidence" value="ECO:0007669"/>
    <property type="project" value="UniProtKB-KW"/>
</dbReference>
<dbReference type="GO" id="GO:0008283">
    <property type="term" value="P:cell population proliferation"/>
    <property type="evidence" value="ECO:0007669"/>
    <property type="project" value="InterPro"/>
</dbReference>
<dbReference type="InterPro" id="IPR009438">
    <property type="entry name" value="Phytosulfokine"/>
</dbReference>
<dbReference type="PANTHER" id="PTHR33285:SF57">
    <property type="entry name" value="PHYTOSULFOKINES 1"/>
    <property type="match status" value="1"/>
</dbReference>
<dbReference type="PANTHER" id="PTHR33285">
    <property type="entry name" value="PHYTOSULFOKINES 3"/>
    <property type="match status" value="1"/>
</dbReference>
<dbReference type="Pfam" id="PF06404">
    <property type="entry name" value="PSK"/>
    <property type="match status" value="1"/>
</dbReference>
<feature type="signal peptide" evidence="2">
    <location>
        <begin position="1"/>
        <end position="24"/>
    </location>
</feature>
<feature type="propeptide" id="PRO_0000024081" evidence="2">
    <location>
        <begin position="25"/>
        <end position="76"/>
    </location>
</feature>
<feature type="peptide" id="PRO_0000024082" description="Phytosulfokine-alpha" evidence="1">
    <location>
        <begin position="77"/>
        <end position="81"/>
    </location>
</feature>
<feature type="peptide" id="PRO_0000024083" description="Phytosulfokine-beta" evidence="1">
    <location>
        <begin position="77"/>
        <end position="80"/>
    </location>
</feature>
<feature type="propeptide" id="PRO_0000024084" evidence="2">
    <location>
        <begin position="82"/>
        <end position="87"/>
    </location>
</feature>
<feature type="region of interest" description="Disordered" evidence="3">
    <location>
        <begin position="31"/>
        <end position="59"/>
    </location>
</feature>
<feature type="compositionally biased region" description="Basic and acidic residues" evidence="3">
    <location>
        <begin position="41"/>
        <end position="59"/>
    </location>
</feature>
<feature type="modified residue" description="Sulfotyrosine" evidence="1">
    <location>
        <position position="77"/>
    </location>
</feature>
<feature type="modified residue" description="Sulfotyrosine" evidence="1">
    <location>
        <position position="79"/>
    </location>
</feature>
<organism>
    <name type="scientific">Arabidopsis thaliana</name>
    <name type="common">Mouse-ear cress</name>
    <dbReference type="NCBI Taxonomy" id="3702"/>
    <lineage>
        <taxon>Eukaryota</taxon>
        <taxon>Viridiplantae</taxon>
        <taxon>Streptophyta</taxon>
        <taxon>Embryophyta</taxon>
        <taxon>Tracheophyta</taxon>
        <taxon>Spermatophyta</taxon>
        <taxon>Magnoliopsida</taxon>
        <taxon>eudicotyledons</taxon>
        <taxon>Gunneridae</taxon>
        <taxon>Pentapetalae</taxon>
        <taxon>rosids</taxon>
        <taxon>malvids</taxon>
        <taxon>Brassicales</taxon>
        <taxon>Brassicaceae</taxon>
        <taxon>Camelineae</taxon>
        <taxon>Arabidopsis</taxon>
    </lineage>
</organism>
<accession>Q9LMY9</accession>
<accession>Q7PCB8</accession>
<accession>Q8W5R0</accession>
<sequence length="87" mass="9653">MMKTKSEVLIFFFTLVLLLSMASSVILREDGFAPPKPSPTTHEKASTKGDRDGVECKNSDSEEECLVKKTVAAHTDYIYTQDLNLSP</sequence>
<keyword id="KW-0217">Developmental protein</keyword>
<keyword id="KW-0221">Differentiation</keyword>
<keyword id="KW-0339">Growth factor</keyword>
<keyword id="KW-1185">Reference proteome</keyword>
<keyword id="KW-0964">Secreted</keyword>
<keyword id="KW-0732">Signal</keyword>
<keyword id="KW-0765">Sulfation</keyword>